<comment type="function">
    <text evidence="3">Destroys superoxide anion radicals which are normally produced within the cells and which are toxic to biological systems.</text>
</comment>
<comment type="catalytic activity">
    <reaction evidence="3">
        <text>2 superoxide + 2 H(+) = H2O2 + O2</text>
        <dbReference type="Rhea" id="RHEA:20696"/>
        <dbReference type="ChEBI" id="CHEBI:15378"/>
        <dbReference type="ChEBI" id="CHEBI:15379"/>
        <dbReference type="ChEBI" id="CHEBI:16240"/>
        <dbReference type="ChEBI" id="CHEBI:18421"/>
        <dbReference type="EC" id="1.15.1.1"/>
    </reaction>
    <physiologicalReaction direction="left-to-right" evidence="3">
        <dbReference type="Rhea" id="RHEA:20697"/>
    </physiologicalReaction>
</comment>
<comment type="cofactor">
    <cofactor evidence="3">
        <name>Fe cation</name>
        <dbReference type="ChEBI" id="CHEBI:24875"/>
    </cofactor>
    <text evidence="3">Binds 1 Fe cation per subunit.</text>
</comment>
<comment type="subunit">
    <text evidence="1">Homodimer.</text>
</comment>
<comment type="subcellular location">
    <subcellularLocation>
        <location evidence="2">Plastid</location>
        <location evidence="2">Chloroplast</location>
    </subcellularLocation>
</comment>
<comment type="tissue specificity">
    <text evidence="3">Strongly expressed in the stems of the young seedlings, etiolated seedlings and embryogenic calli, but only minimally expressed in the leaves and the roots.</text>
</comment>
<comment type="induction">
    <text evidence="3">By light.</text>
</comment>
<comment type="similarity">
    <text evidence="5">Belongs to the iron/manganese superoxide dismutase family.</text>
</comment>
<reference key="1">
    <citation type="journal article" date="1999" name="Biosci. Biotechnol. Biochem.">
        <title>Molecular cloning and characterization of a cDNA for an iron-superoxide dismutase in rice (Oryza sativa L.).</title>
        <authorList>
            <person name="Kaminaka H."/>
            <person name="Morita S."/>
            <person name="Tokumoto M."/>
            <person name="Yokoyama H."/>
            <person name="Masumura T."/>
            <person name="Tanaka K."/>
        </authorList>
    </citation>
    <scope>NUCLEOTIDE SEQUENCE [MRNA]</scope>
    <scope>COFACTOR</scope>
    <scope>FUNCTION</scope>
    <scope>CATALYTIC ACTIVITY</scope>
    <scope>TISSUE SPECIFICITY</scope>
    <scope>INDUCTION BY LIGHT</scope>
    <source>
        <strain>cv. Nipponbare</strain>
    </source>
</reference>
<reference key="2">
    <citation type="journal article" date="2005" name="Nature">
        <title>The map-based sequence of the rice genome.</title>
        <authorList>
            <consortium name="International rice genome sequencing project (IRGSP)"/>
        </authorList>
    </citation>
    <scope>NUCLEOTIDE SEQUENCE [LARGE SCALE GENOMIC DNA]</scope>
    <source>
        <strain>cv. Nipponbare</strain>
    </source>
</reference>
<reference key="3">
    <citation type="journal article" date="2008" name="Nucleic Acids Res.">
        <title>The rice annotation project database (RAP-DB): 2008 update.</title>
        <authorList>
            <consortium name="The rice annotation project (RAP)"/>
        </authorList>
    </citation>
    <scope>GENOME REANNOTATION</scope>
    <source>
        <strain>cv. Nipponbare</strain>
    </source>
</reference>
<reference key="4">
    <citation type="journal article" date="2013" name="Rice">
        <title>Improvement of the Oryza sativa Nipponbare reference genome using next generation sequence and optical map data.</title>
        <authorList>
            <person name="Kawahara Y."/>
            <person name="de la Bastide M."/>
            <person name="Hamilton J.P."/>
            <person name="Kanamori H."/>
            <person name="McCombie W.R."/>
            <person name="Ouyang S."/>
            <person name="Schwartz D.C."/>
            <person name="Tanaka T."/>
            <person name="Wu J."/>
            <person name="Zhou S."/>
            <person name="Childs K.L."/>
            <person name="Davidson R.M."/>
            <person name="Lin H."/>
            <person name="Quesada-Ocampo L."/>
            <person name="Vaillancourt B."/>
            <person name="Sakai H."/>
            <person name="Lee S.S."/>
            <person name="Kim J."/>
            <person name="Numa H."/>
            <person name="Itoh T."/>
            <person name="Buell C.R."/>
            <person name="Matsumoto T."/>
        </authorList>
    </citation>
    <scope>GENOME REANNOTATION</scope>
    <source>
        <strain>cv. Nipponbare</strain>
    </source>
</reference>
<reference key="5">
    <citation type="journal article" date="2003" name="Science">
        <title>Collection, mapping, and annotation of over 28,000 cDNA clones from japonica rice.</title>
        <authorList>
            <consortium name="The rice full-length cDNA consortium"/>
        </authorList>
    </citation>
    <scope>NUCLEOTIDE SEQUENCE [LARGE SCALE MRNA]</scope>
    <source>
        <strain>cv. Nipponbare</strain>
    </source>
</reference>
<dbReference type="EC" id="1.15.1.1" evidence="3"/>
<dbReference type="EMBL" id="AB014056">
    <property type="protein sequence ID" value="BAA37131.1"/>
    <property type="molecule type" value="mRNA"/>
</dbReference>
<dbReference type="EMBL" id="AP000399">
    <property type="protein sequence ID" value="BAD67658.1"/>
    <property type="molecule type" value="Genomic_DNA"/>
</dbReference>
<dbReference type="EMBL" id="AP008212">
    <property type="protein sequence ID" value="BAF18688.1"/>
    <property type="molecule type" value="Genomic_DNA"/>
</dbReference>
<dbReference type="EMBL" id="AP014962">
    <property type="protein sequence ID" value="BAS96109.1"/>
    <property type="molecule type" value="Genomic_DNA"/>
</dbReference>
<dbReference type="EMBL" id="AK062073">
    <property type="protein sequence ID" value="BAG88209.1"/>
    <property type="molecule type" value="mRNA"/>
</dbReference>
<dbReference type="EMBL" id="AK071301">
    <property type="protein sequence ID" value="BAG92419.1"/>
    <property type="molecule type" value="mRNA"/>
</dbReference>
<dbReference type="PIR" id="JG0179">
    <property type="entry name" value="JG0179"/>
</dbReference>
<dbReference type="RefSeq" id="XP_015642495.1">
    <property type="nucleotide sequence ID" value="XM_015787009.1"/>
</dbReference>
<dbReference type="SMR" id="Q5VSB7"/>
<dbReference type="FunCoup" id="Q5VSB7">
    <property type="interactions" value="202"/>
</dbReference>
<dbReference type="STRING" id="39947.Q5VSB7"/>
<dbReference type="PaxDb" id="39947-Q5VSB7"/>
<dbReference type="EnsemblPlants" id="Os06t0143000-01">
    <property type="protein sequence ID" value="Os06t0143000-01"/>
    <property type="gene ID" value="Os06g0143000"/>
</dbReference>
<dbReference type="Gramene" id="Os06t0143000-01">
    <property type="protein sequence ID" value="Os06t0143000-01"/>
    <property type="gene ID" value="Os06g0143000"/>
</dbReference>
<dbReference type="KEGG" id="dosa:Os06g0143000"/>
<dbReference type="KEGG" id="osa:4340091"/>
<dbReference type="eggNOG" id="KOG0876">
    <property type="taxonomic scope" value="Eukaryota"/>
</dbReference>
<dbReference type="HOGENOM" id="CLU_031625_0_0_1"/>
<dbReference type="InParanoid" id="Q5VSB7"/>
<dbReference type="OMA" id="HNQFWEM"/>
<dbReference type="OrthoDB" id="239262at2759"/>
<dbReference type="PlantReactome" id="R-OSA-1119403">
    <property type="pathway name" value="Removal of superoxide radicals"/>
</dbReference>
<dbReference type="Proteomes" id="UP000000763">
    <property type="component" value="Chromosome 6"/>
</dbReference>
<dbReference type="Proteomes" id="UP000059680">
    <property type="component" value="Chromosome 6"/>
</dbReference>
<dbReference type="GO" id="GO:0042644">
    <property type="term" value="C:chloroplast nucleoid"/>
    <property type="evidence" value="ECO:0000318"/>
    <property type="project" value="GO_Central"/>
</dbReference>
<dbReference type="GO" id="GO:0009579">
    <property type="term" value="C:thylakoid"/>
    <property type="evidence" value="ECO:0007669"/>
    <property type="project" value="EnsemblPlants"/>
</dbReference>
<dbReference type="GO" id="GO:0046872">
    <property type="term" value="F:metal ion binding"/>
    <property type="evidence" value="ECO:0007669"/>
    <property type="project" value="UniProtKB-KW"/>
</dbReference>
<dbReference type="GO" id="GO:0004784">
    <property type="term" value="F:superoxide dismutase activity"/>
    <property type="evidence" value="ECO:0000314"/>
    <property type="project" value="UniProtKB"/>
</dbReference>
<dbReference type="FunFam" id="1.10.287.990:FF:000002">
    <property type="entry name" value="Superoxide dismutase"/>
    <property type="match status" value="1"/>
</dbReference>
<dbReference type="FunFam" id="3.55.40.20:FF:000007">
    <property type="entry name" value="Superoxide dismutase"/>
    <property type="match status" value="1"/>
</dbReference>
<dbReference type="Gene3D" id="1.10.287.990">
    <property type="entry name" value="Fe,Mn superoxide dismutase (SOD) domain"/>
    <property type="match status" value="1"/>
</dbReference>
<dbReference type="Gene3D" id="3.55.40.20">
    <property type="entry name" value="Iron/manganese superoxide dismutase, C-terminal domain"/>
    <property type="match status" value="1"/>
</dbReference>
<dbReference type="InterPro" id="IPR001189">
    <property type="entry name" value="Mn/Fe_SOD"/>
</dbReference>
<dbReference type="InterPro" id="IPR019833">
    <property type="entry name" value="Mn/Fe_SOD_BS"/>
</dbReference>
<dbReference type="InterPro" id="IPR019832">
    <property type="entry name" value="Mn/Fe_SOD_C"/>
</dbReference>
<dbReference type="InterPro" id="IPR019831">
    <property type="entry name" value="Mn/Fe_SOD_N"/>
</dbReference>
<dbReference type="InterPro" id="IPR036324">
    <property type="entry name" value="Mn/Fe_SOD_N_sf"/>
</dbReference>
<dbReference type="InterPro" id="IPR036314">
    <property type="entry name" value="SOD_C_sf"/>
</dbReference>
<dbReference type="PANTHER" id="PTHR42769">
    <property type="entry name" value="SUPEROXIDE DISMUTASE"/>
    <property type="match status" value="1"/>
</dbReference>
<dbReference type="PANTHER" id="PTHR42769:SF10">
    <property type="entry name" value="SUPEROXIDE DISMUTASE [FE] 3, CHLOROPLASTIC"/>
    <property type="match status" value="1"/>
</dbReference>
<dbReference type="Pfam" id="PF02777">
    <property type="entry name" value="Sod_Fe_C"/>
    <property type="match status" value="1"/>
</dbReference>
<dbReference type="Pfam" id="PF00081">
    <property type="entry name" value="Sod_Fe_N"/>
    <property type="match status" value="1"/>
</dbReference>
<dbReference type="PIRSF" id="PIRSF000349">
    <property type="entry name" value="SODismutase"/>
    <property type="match status" value="1"/>
</dbReference>
<dbReference type="PRINTS" id="PR01703">
    <property type="entry name" value="MNSODISMTASE"/>
</dbReference>
<dbReference type="SUPFAM" id="SSF54719">
    <property type="entry name" value="Fe,Mn superoxide dismutase (SOD), C-terminal domain"/>
    <property type="match status" value="1"/>
</dbReference>
<dbReference type="SUPFAM" id="SSF46609">
    <property type="entry name" value="Fe,Mn superoxide dismutase (SOD), N-terminal domain"/>
    <property type="match status" value="1"/>
</dbReference>
<dbReference type="PROSITE" id="PS00088">
    <property type="entry name" value="SOD_MN"/>
    <property type="match status" value="1"/>
</dbReference>
<feature type="transit peptide" description="Chloroplast" evidence="2">
    <location>
        <begin position="1"/>
        <end position="32"/>
    </location>
</feature>
<feature type="chain" id="PRO_0000421268" description="Superoxide dismutase [Fe] 2, chloroplastic">
    <location>
        <begin position="33"/>
        <end position="255"/>
    </location>
</feature>
<feature type="binding site" evidence="1">
    <location>
        <position position="67"/>
    </location>
    <ligand>
        <name>Fe cation</name>
        <dbReference type="ChEBI" id="CHEBI:24875"/>
    </ligand>
</feature>
<feature type="binding site" evidence="1">
    <location>
        <position position="119"/>
    </location>
    <ligand>
        <name>Fe cation</name>
        <dbReference type="ChEBI" id="CHEBI:24875"/>
    </ligand>
</feature>
<feature type="binding site" evidence="1">
    <location>
        <position position="203"/>
    </location>
    <ligand>
        <name>Fe cation</name>
        <dbReference type="ChEBI" id="CHEBI:24875"/>
    </ligand>
</feature>
<feature type="binding site" evidence="1">
    <location>
        <position position="207"/>
    </location>
    <ligand>
        <name>Fe cation</name>
        <dbReference type="ChEBI" id="CHEBI:24875"/>
    </ligand>
</feature>
<feature type="sequence conflict" description="In Ref. 1; BAA37131." evidence="5" ref="1">
    <original>W</original>
    <variation>L</variation>
    <location>
        <position position="170"/>
    </location>
</feature>
<feature type="sequence conflict" description="In Ref. 1; BAA37131." evidence="5" ref="1">
    <original>F</original>
    <variation>L</variation>
    <location>
        <position position="180"/>
    </location>
</feature>
<sequence length="255" mass="29477">MAAFASALRVLPSPPAAVPRRLRSREQRQGCRSRRYSKVVAYYALTTPPYKLDALEPYISKRTVELHWGKHQQDYVDSLNKQLATSMFYGYTLEELIKEAYNNGNPLPEYNNAAQVWNHHFFWESMQPEGGGSPGRGVLQQIEKDFGSFTNFREEFIRSALSLLGSGWVWLVLKRKERKFSVVHTQNAISPLALGDIPLINLDLWEHAYYLDYKDDRRMYVTNFIDHLVSWDTVTLRMMRAEAFVNLGEPNIPVA</sequence>
<organism>
    <name type="scientific">Oryza sativa subsp. japonica</name>
    <name type="common">Rice</name>
    <dbReference type="NCBI Taxonomy" id="39947"/>
    <lineage>
        <taxon>Eukaryota</taxon>
        <taxon>Viridiplantae</taxon>
        <taxon>Streptophyta</taxon>
        <taxon>Embryophyta</taxon>
        <taxon>Tracheophyta</taxon>
        <taxon>Spermatophyta</taxon>
        <taxon>Magnoliopsida</taxon>
        <taxon>Liliopsida</taxon>
        <taxon>Poales</taxon>
        <taxon>Poaceae</taxon>
        <taxon>BOP clade</taxon>
        <taxon>Oryzoideae</taxon>
        <taxon>Oryzeae</taxon>
        <taxon>Oryzinae</taxon>
        <taxon>Oryza</taxon>
        <taxon>Oryza sativa</taxon>
    </lineage>
</organism>
<gene>
    <name evidence="7" type="ordered locus">Os06g0143000</name>
    <name evidence="5" type="ordered locus">LOC_Os06g05110</name>
    <name evidence="6" type="ORF">P0535G04.31</name>
</gene>
<name>SODF2_ORYSJ</name>
<protein>
    <recommendedName>
        <fullName evidence="5">Superoxide dismutase [Fe] 2, chloroplastic</fullName>
        <ecNumber evidence="3">1.15.1.1</ecNumber>
    </recommendedName>
    <alternativeName>
        <fullName evidence="4">Iron-superoxide dismutase</fullName>
    </alternativeName>
</protein>
<evidence type="ECO:0000250" key="1">
    <source>
        <dbReference type="UniProtKB" id="Q8IAY6"/>
    </source>
</evidence>
<evidence type="ECO:0000255" key="2"/>
<evidence type="ECO:0000269" key="3">
    <source>
    </source>
</evidence>
<evidence type="ECO:0000303" key="4">
    <source>
    </source>
</evidence>
<evidence type="ECO:0000305" key="5"/>
<evidence type="ECO:0000312" key="6">
    <source>
        <dbReference type="EMBL" id="BAD67658.1"/>
    </source>
</evidence>
<evidence type="ECO:0000312" key="7">
    <source>
        <dbReference type="EMBL" id="BAS96109.1"/>
    </source>
</evidence>
<accession>Q5VSB7</accession>
<accession>A0A0P0WSV1</accession>
<accession>Q9ZWM8</accession>
<proteinExistence type="evidence at protein level"/>
<keyword id="KW-0150">Chloroplast</keyword>
<keyword id="KW-0408">Iron</keyword>
<keyword id="KW-0479">Metal-binding</keyword>
<keyword id="KW-0560">Oxidoreductase</keyword>
<keyword id="KW-0934">Plastid</keyword>
<keyword id="KW-1185">Reference proteome</keyword>
<keyword id="KW-0809">Transit peptide</keyword>